<evidence type="ECO:0000250" key="1"/>
<evidence type="ECO:0000269" key="2">
    <source>
    </source>
</evidence>
<evidence type="ECO:0000305" key="3"/>
<evidence type="ECO:0000305" key="4">
    <source>
    </source>
</evidence>
<evidence type="ECO:0007744" key="5">
    <source>
        <dbReference type="PDB" id="1QPN"/>
    </source>
</evidence>
<evidence type="ECO:0007744" key="6">
    <source>
        <dbReference type="PDB" id="1QPO"/>
    </source>
</evidence>
<evidence type="ECO:0007744" key="7">
    <source>
        <dbReference type="PDB" id="1QPQ"/>
    </source>
</evidence>
<evidence type="ECO:0007744" key="8">
    <source>
        <dbReference type="PDB" id="1QPR"/>
    </source>
</evidence>
<evidence type="ECO:0007829" key="9">
    <source>
        <dbReference type="PDB" id="1QPO"/>
    </source>
</evidence>
<evidence type="ECO:0007829" key="10">
    <source>
        <dbReference type="PDB" id="1QPQ"/>
    </source>
</evidence>
<feature type="chain" id="PRO_0000155946" description="Nicotinate-nucleotide pyrophosphorylase [carboxylating]">
    <location>
        <begin position="1"/>
        <end position="285"/>
    </location>
</feature>
<feature type="binding site" evidence="2">
    <location>
        <position position="105"/>
    </location>
    <ligand>
        <name>substrate</name>
    </ligand>
</feature>
<feature type="binding site">
    <location>
        <begin position="138"/>
        <end position="140"/>
    </location>
    <ligand>
        <name>substrate</name>
    </ligand>
</feature>
<feature type="binding site" evidence="2">
    <location>
        <position position="162"/>
    </location>
    <ligand>
        <name>substrate</name>
    </ligand>
</feature>
<feature type="binding site" evidence="2">
    <location>
        <position position="172"/>
    </location>
    <ligand>
        <name>substrate</name>
    </ligand>
</feature>
<feature type="binding site" evidence="2">
    <location>
        <position position="201"/>
    </location>
    <ligand>
        <name>substrate</name>
    </ligand>
</feature>
<feature type="binding site" evidence="2">
    <location>
        <position position="222"/>
    </location>
    <ligand>
        <name>substrate</name>
    </ligand>
</feature>
<feature type="binding site">
    <location>
        <begin position="248"/>
        <end position="250"/>
    </location>
    <ligand>
        <name>substrate</name>
    </ligand>
</feature>
<feature type="binding site">
    <location>
        <begin position="269"/>
        <end position="271"/>
    </location>
    <ligand>
        <name>substrate</name>
    </ligand>
</feature>
<feature type="helix" evidence="9">
    <location>
        <begin position="5"/>
        <end position="23"/>
    </location>
</feature>
<feature type="helix" evidence="9">
    <location>
        <begin position="29"/>
        <end position="34"/>
    </location>
</feature>
<feature type="strand" evidence="9">
    <location>
        <begin position="40"/>
        <end position="49"/>
    </location>
</feature>
<feature type="helix" evidence="9">
    <location>
        <begin position="56"/>
        <end position="67"/>
    </location>
</feature>
<feature type="strand" evidence="9">
    <location>
        <begin position="71"/>
        <end position="77"/>
    </location>
</feature>
<feature type="strand" evidence="9">
    <location>
        <begin position="89"/>
        <end position="96"/>
    </location>
</feature>
<feature type="helix" evidence="9">
    <location>
        <begin position="97"/>
        <end position="127"/>
    </location>
</feature>
<feature type="turn" evidence="9">
    <location>
        <begin position="128"/>
        <end position="130"/>
    </location>
</feature>
<feature type="strand" evidence="9">
    <location>
        <begin position="134"/>
        <end position="136"/>
    </location>
</feature>
<feature type="turn" evidence="10">
    <location>
        <begin position="143"/>
        <end position="145"/>
    </location>
</feature>
<feature type="helix" evidence="9">
    <location>
        <begin position="146"/>
        <end position="155"/>
    </location>
</feature>
<feature type="strand" evidence="9">
    <location>
        <begin position="164"/>
        <end position="171"/>
    </location>
</feature>
<feature type="helix" evidence="9">
    <location>
        <begin position="173"/>
        <end position="179"/>
    </location>
</feature>
<feature type="helix" evidence="9">
    <location>
        <begin position="182"/>
        <end position="192"/>
    </location>
</feature>
<feature type="strand" evidence="9">
    <location>
        <begin position="198"/>
        <end position="204"/>
    </location>
</feature>
<feature type="helix" evidence="9">
    <location>
        <begin position="205"/>
        <end position="211"/>
    </location>
</feature>
<feature type="helix" evidence="9">
    <location>
        <begin position="212"/>
        <end position="214"/>
    </location>
</feature>
<feature type="strand" evidence="9">
    <location>
        <begin position="217"/>
        <end position="223"/>
    </location>
</feature>
<feature type="helix" evidence="9">
    <location>
        <begin position="226"/>
        <end position="239"/>
    </location>
</feature>
<feature type="strand" evidence="9">
    <location>
        <begin position="244"/>
        <end position="250"/>
    </location>
</feature>
<feature type="turn" evidence="9">
    <location>
        <begin position="253"/>
        <end position="255"/>
    </location>
</feature>
<feature type="helix" evidence="9">
    <location>
        <begin position="256"/>
        <end position="261"/>
    </location>
</feature>
<feature type="strand" evidence="9">
    <location>
        <begin position="265"/>
        <end position="268"/>
    </location>
</feature>
<feature type="helix" evidence="9">
    <location>
        <begin position="270"/>
        <end position="272"/>
    </location>
</feature>
<feature type="strand" evidence="9">
    <location>
        <begin position="274"/>
        <end position="276"/>
    </location>
</feature>
<feature type="strand" evidence="9">
    <location>
        <begin position="281"/>
        <end position="284"/>
    </location>
</feature>
<dbReference type="EC" id="2.4.2.19" evidence="4"/>
<dbReference type="EMBL" id="AL123456">
    <property type="protein sequence ID" value="CCP44360.1"/>
    <property type="molecule type" value="Genomic_DNA"/>
</dbReference>
<dbReference type="PIR" id="F70543">
    <property type="entry name" value="F70543"/>
</dbReference>
<dbReference type="RefSeq" id="NP_216112.1">
    <property type="nucleotide sequence ID" value="NC_000962.3"/>
</dbReference>
<dbReference type="RefSeq" id="WP_003898939.1">
    <property type="nucleotide sequence ID" value="NZ_NVQJ01000016.1"/>
</dbReference>
<dbReference type="PDB" id="1QPN">
    <property type="method" value="X-ray"/>
    <property type="resolution" value="2.60 A"/>
    <property type="chains" value="A/B/C/D/E/F=2-285"/>
</dbReference>
<dbReference type="PDB" id="1QPO">
    <property type="method" value="X-ray"/>
    <property type="resolution" value="2.40 A"/>
    <property type="chains" value="A/B/C/D/E/F=2-285"/>
</dbReference>
<dbReference type="PDB" id="1QPQ">
    <property type="method" value="X-ray"/>
    <property type="resolution" value="2.45 A"/>
    <property type="chains" value="A/B/C/D/E/F=2-285"/>
</dbReference>
<dbReference type="PDB" id="1QPR">
    <property type="method" value="X-ray"/>
    <property type="resolution" value="2.45 A"/>
    <property type="chains" value="A/B/C/D/E/F=2-285"/>
</dbReference>
<dbReference type="PDBsum" id="1QPN"/>
<dbReference type="PDBsum" id="1QPO"/>
<dbReference type="PDBsum" id="1QPQ"/>
<dbReference type="PDBsum" id="1QPR"/>
<dbReference type="SMR" id="P9WJJ7"/>
<dbReference type="FunCoup" id="P9WJJ7">
    <property type="interactions" value="437"/>
</dbReference>
<dbReference type="STRING" id="83332.Rv1596"/>
<dbReference type="DrugBank" id="DB04294">
    <property type="generic name" value="5-Phosphoribosyl-1-(Beta-Methylene) Pyrophosphate"/>
</dbReference>
<dbReference type="DrugBank" id="DB02382">
    <property type="generic name" value="Namn"/>
</dbReference>
<dbReference type="DrugBank" id="DB02746">
    <property type="generic name" value="Phthalic Acid"/>
</dbReference>
<dbReference type="DrugBank" id="DB01796">
    <property type="generic name" value="Quinolinic Acid"/>
</dbReference>
<dbReference type="PaxDb" id="83332-Rv1596"/>
<dbReference type="DNASU" id="886281"/>
<dbReference type="GeneID" id="886281"/>
<dbReference type="KEGG" id="mtu:Rv1596"/>
<dbReference type="KEGG" id="mtv:RVBD_1596"/>
<dbReference type="TubercuList" id="Rv1596"/>
<dbReference type="eggNOG" id="COG0157">
    <property type="taxonomic scope" value="Bacteria"/>
</dbReference>
<dbReference type="InParanoid" id="P9WJJ7"/>
<dbReference type="OrthoDB" id="9782546at2"/>
<dbReference type="PhylomeDB" id="P9WJJ7"/>
<dbReference type="BRENDA" id="2.4.2.19">
    <property type="organism ID" value="3445"/>
</dbReference>
<dbReference type="UniPathway" id="UPA00253">
    <property type="reaction ID" value="UER00331"/>
</dbReference>
<dbReference type="EvolutionaryTrace" id="P9WJJ7"/>
<dbReference type="Proteomes" id="UP000001584">
    <property type="component" value="Chromosome"/>
</dbReference>
<dbReference type="GO" id="GO:0005737">
    <property type="term" value="C:cytoplasm"/>
    <property type="evidence" value="ECO:0000318"/>
    <property type="project" value="GO_Central"/>
</dbReference>
<dbReference type="GO" id="GO:0009274">
    <property type="term" value="C:peptidoglycan-based cell wall"/>
    <property type="evidence" value="ECO:0007005"/>
    <property type="project" value="MTBBASE"/>
</dbReference>
<dbReference type="GO" id="GO:0005886">
    <property type="term" value="C:plasma membrane"/>
    <property type="evidence" value="ECO:0007005"/>
    <property type="project" value="MTBBASE"/>
</dbReference>
<dbReference type="GO" id="GO:0004514">
    <property type="term" value="F:nicotinate-nucleotide diphosphorylase (carboxylating) activity"/>
    <property type="evidence" value="ECO:0000314"/>
    <property type="project" value="MTBBASE"/>
</dbReference>
<dbReference type="GO" id="GO:0009435">
    <property type="term" value="P:NAD biosynthetic process"/>
    <property type="evidence" value="ECO:0000314"/>
    <property type="project" value="MTBBASE"/>
</dbReference>
<dbReference type="GO" id="GO:0034213">
    <property type="term" value="P:quinolinate catabolic process"/>
    <property type="evidence" value="ECO:0000318"/>
    <property type="project" value="GO_Central"/>
</dbReference>
<dbReference type="CDD" id="cd01572">
    <property type="entry name" value="QPRTase"/>
    <property type="match status" value="1"/>
</dbReference>
<dbReference type="FunFam" id="3.20.20.70:FF:000030">
    <property type="entry name" value="Nicotinate-nucleotide pyrophosphorylase, carboxylating"/>
    <property type="match status" value="1"/>
</dbReference>
<dbReference type="Gene3D" id="3.20.20.70">
    <property type="entry name" value="Aldolase class I"/>
    <property type="match status" value="1"/>
</dbReference>
<dbReference type="Gene3D" id="3.90.1170.20">
    <property type="entry name" value="Quinolinate phosphoribosyl transferase, N-terminal domain"/>
    <property type="match status" value="1"/>
</dbReference>
<dbReference type="InterPro" id="IPR013785">
    <property type="entry name" value="Aldolase_TIM"/>
</dbReference>
<dbReference type="InterPro" id="IPR004393">
    <property type="entry name" value="NadC"/>
</dbReference>
<dbReference type="InterPro" id="IPR027277">
    <property type="entry name" value="NadC/ModD"/>
</dbReference>
<dbReference type="InterPro" id="IPR036068">
    <property type="entry name" value="Nicotinate_pribotase-like_C"/>
</dbReference>
<dbReference type="InterPro" id="IPR037128">
    <property type="entry name" value="Quinolinate_PRibosylTase_N_sf"/>
</dbReference>
<dbReference type="InterPro" id="IPR002638">
    <property type="entry name" value="Quinolinate_PRibosylTrfase_C"/>
</dbReference>
<dbReference type="InterPro" id="IPR022412">
    <property type="entry name" value="Quinolinate_PRibosylTrfase_N"/>
</dbReference>
<dbReference type="NCBIfam" id="TIGR00078">
    <property type="entry name" value="nadC"/>
    <property type="match status" value="1"/>
</dbReference>
<dbReference type="PANTHER" id="PTHR32179">
    <property type="entry name" value="NICOTINATE-NUCLEOTIDE PYROPHOSPHORYLASE [CARBOXYLATING]"/>
    <property type="match status" value="1"/>
</dbReference>
<dbReference type="PANTHER" id="PTHR32179:SF3">
    <property type="entry name" value="NICOTINATE-NUCLEOTIDE PYROPHOSPHORYLASE [CARBOXYLATING]"/>
    <property type="match status" value="1"/>
</dbReference>
<dbReference type="Pfam" id="PF01729">
    <property type="entry name" value="QRPTase_C"/>
    <property type="match status" value="1"/>
</dbReference>
<dbReference type="Pfam" id="PF02749">
    <property type="entry name" value="QRPTase_N"/>
    <property type="match status" value="1"/>
</dbReference>
<dbReference type="PIRSF" id="PIRSF006250">
    <property type="entry name" value="NadC_ModD"/>
    <property type="match status" value="1"/>
</dbReference>
<dbReference type="SUPFAM" id="SSF51690">
    <property type="entry name" value="Nicotinate/Quinolinate PRTase C-terminal domain-like"/>
    <property type="match status" value="1"/>
</dbReference>
<dbReference type="SUPFAM" id="SSF54675">
    <property type="entry name" value="Nicotinate/Quinolinate PRTase N-terminal domain-like"/>
    <property type="match status" value="1"/>
</dbReference>
<accession>P9WJJ7</accession>
<accession>L0T8R5</accession>
<accession>O06594</accession>
<name>NADC_MYCTU</name>
<organism>
    <name type="scientific">Mycobacterium tuberculosis (strain ATCC 25618 / H37Rv)</name>
    <dbReference type="NCBI Taxonomy" id="83332"/>
    <lineage>
        <taxon>Bacteria</taxon>
        <taxon>Bacillati</taxon>
        <taxon>Actinomycetota</taxon>
        <taxon>Actinomycetes</taxon>
        <taxon>Mycobacteriales</taxon>
        <taxon>Mycobacteriaceae</taxon>
        <taxon>Mycobacterium</taxon>
        <taxon>Mycobacterium tuberculosis complex</taxon>
    </lineage>
</organism>
<gene>
    <name type="primary">nadC</name>
    <name type="ordered locus">Rv1596</name>
    <name type="ORF">MTCY336.08c</name>
</gene>
<proteinExistence type="evidence at protein level"/>
<protein>
    <recommendedName>
        <fullName>Nicotinate-nucleotide pyrophosphorylase [carboxylating]</fullName>
        <ecNumber evidence="4">2.4.2.19</ecNumber>
    </recommendedName>
    <alternativeName>
        <fullName>Quinolinate phosphoribosyltransferase [decarboxylating]</fullName>
        <shortName>QAPRTase</shortName>
    </alternativeName>
</protein>
<reference key="1">
    <citation type="journal article" date="1998" name="Nature">
        <title>Deciphering the biology of Mycobacterium tuberculosis from the complete genome sequence.</title>
        <authorList>
            <person name="Cole S.T."/>
            <person name="Brosch R."/>
            <person name="Parkhill J."/>
            <person name="Garnier T."/>
            <person name="Churcher C.M."/>
            <person name="Harris D.E."/>
            <person name="Gordon S.V."/>
            <person name="Eiglmeier K."/>
            <person name="Gas S."/>
            <person name="Barry C.E. III"/>
            <person name="Tekaia F."/>
            <person name="Badcock K."/>
            <person name="Basham D."/>
            <person name="Brown D."/>
            <person name="Chillingworth T."/>
            <person name="Connor R."/>
            <person name="Davies R.M."/>
            <person name="Devlin K."/>
            <person name="Feltwell T."/>
            <person name="Gentles S."/>
            <person name="Hamlin N."/>
            <person name="Holroyd S."/>
            <person name="Hornsby T."/>
            <person name="Jagels K."/>
            <person name="Krogh A."/>
            <person name="McLean J."/>
            <person name="Moule S."/>
            <person name="Murphy L.D."/>
            <person name="Oliver S."/>
            <person name="Osborne J."/>
            <person name="Quail M.A."/>
            <person name="Rajandream M.A."/>
            <person name="Rogers J."/>
            <person name="Rutter S."/>
            <person name="Seeger K."/>
            <person name="Skelton S."/>
            <person name="Squares S."/>
            <person name="Squares R."/>
            <person name="Sulston J.E."/>
            <person name="Taylor K."/>
            <person name="Whitehead S."/>
            <person name="Barrell B.G."/>
        </authorList>
    </citation>
    <scope>NUCLEOTIDE SEQUENCE [LARGE SCALE GENOMIC DNA]</scope>
    <source>
        <strain>ATCC 25618 / H37Rv</strain>
    </source>
</reference>
<reference key="2">
    <citation type="journal article" date="2011" name="Mol. Cell. Proteomics">
        <title>Proteogenomic analysis of Mycobacterium tuberculosis by high resolution mass spectrometry.</title>
        <authorList>
            <person name="Kelkar D.S."/>
            <person name="Kumar D."/>
            <person name="Kumar P."/>
            <person name="Balakrishnan L."/>
            <person name="Muthusamy B."/>
            <person name="Yadav A.K."/>
            <person name="Shrivastava P."/>
            <person name="Marimuthu A."/>
            <person name="Anand S."/>
            <person name="Sundaram H."/>
            <person name="Kingsbury R."/>
            <person name="Harsha H.C."/>
            <person name="Nair B."/>
            <person name="Prasad T.S."/>
            <person name="Chauhan D.S."/>
            <person name="Katoch K."/>
            <person name="Katoch V.M."/>
            <person name="Kumar P."/>
            <person name="Chaerkady R."/>
            <person name="Ramachandran S."/>
            <person name="Dash D."/>
            <person name="Pandey A."/>
        </authorList>
    </citation>
    <scope>IDENTIFICATION BY MASS SPECTROMETRY [LARGE SCALE ANALYSIS]</scope>
    <source>
        <strain>ATCC 25618 / H37Rv</strain>
    </source>
</reference>
<reference evidence="5 6 7 8" key="3">
    <citation type="journal article" date="1998" name="Structure">
        <title>Crystal structure of quinolinic acid phosphoribosyltransferase from Mycobacterium tuberculosis: a potential tb drug target.</title>
        <authorList>
            <person name="Sharma V."/>
            <person name="Grubmeyer C."/>
            <person name="Sacchettini J.C."/>
        </authorList>
    </citation>
    <scope>X-RAY CRYSTALLOGRAPHY (2.6 ANGSTROMS) IN COMPLEX WITH SUBSTRATE</scope>
    <scope>SUBUNIT</scope>
    <source>
        <strain>ATCC 25618 / H37Rv</strain>
    </source>
</reference>
<keyword id="KW-0002">3D-structure</keyword>
<keyword id="KW-0328">Glycosyltransferase</keyword>
<keyword id="KW-0662">Pyridine nucleotide biosynthesis</keyword>
<keyword id="KW-1185">Reference proteome</keyword>
<keyword id="KW-0808">Transferase</keyword>
<sequence length="285" mass="29951">MGLSDWELAAARAAIARGLDEDLRYGPDVTTLATVPASATTTASLVTREAGVVAGLDVALLTLNEVLGTNGYRVLDRVEDGARVPPGEALMTLEAQTRGLLTAERTMLNLVGHLSGIATATAAWVDAVRGTKAKIRDTRKTLPGLRALQKYAVRTGGGVNHRLGLGDAALIKDNHVAAAGSVVDALRAVRNAAPDLPCEVEVDSLEQLDAVLPEKPELILLDNFAVWQTQTAVQRRDSRAPTVMLESSGGLSLQTAATYAETGVDYLAVGALTHSVRVLDIGLDM</sequence>
<comment type="function">
    <text evidence="1">Involved in the catabolism of quinolinic acid (QA).</text>
</comment>
<comment type="catalytic activity">
    <reaction evidence="4">
        <text>nicotinate beta-D-ribonucleotide + CO2 + diphosphate = quinolinate + 5-phospho-alpha-D-ribose 1-diphosphate + 2 H(+)</text>
        <dbReference type="Rhea" id="RHEA:12733"/>
        <dbReference type="ChEBI" id="CHEBI:15378"/>
        <dbReference type="ChEBI" id="CHEBI:16526"/>
        <dbReference type="ChEBI" id="CHEBI:29959"/>
        <dbReference type="ChEBI" id="CHEBI:33019"/>
        <dbReference type="ChEBI" id="CHEBI:57502"/>
        <dbReference type="ChEBI" id="CHEBI:58017"/>
        <dbReference type="EC" id="2.4.2.19"/>
    </reaction>
</comment>
<comment type="pathway">
    <text>Cofactor biosynthesis; NAD(+) biosynthesis; nicotinate D-ribonucleotide from quinolinate: step 1/1.</text>
</comment>
<comment type="subunit">
    <text evidence="2">Homodimer. Hexamer formed by 3 homodimers.</text>
</comment>
<comment type="similarity">
    <text evidence="3">Belongs to the NadC/ModD family.</text>
</comment>